<feature type="chain" id="PRO_0000264046" description="Peptidyl-tRNA hydrolase">
    <location>
        <begin position="1"/>
        <end position="195"/>
    </location>
</feature>
<feature type="active site" description="Proton acceptor" evidence="1">
    <location>
        <position position="23"/>
    </location>
</feature>
<feature type="binding site" evidence="1">
    <location>
        <position position="18"/>
    </location>
    <ligand>
        <name>tRNA</name>
        <dbReference type="ChEBI" id="CHEBI:17843"/>
    </ligand>
</feature>
<feature type="binding site" evidence="1">
    <location>
        <position position="69"/>
    </location>
    <ligand>
        <name>tRNA</name>
        <dbReference type="ChEBI" id="CHEBI:17843"/>
    </ligand>
</feature>
<feature type="binding site" evidence="1">
    <location>
        <position position="71"/>
    </location>
    <ligand>
        <name>tRNA</name>
        <dbReference type="ChEBI" id="CHEBI:17843"/>
    </ligand>
</feature>
<feature type="binding site" evidence="1">
    <location>
        <position position="117"/>
    </location>
    <ligand>
        <name>tRNA</name>
        <dbReference type="ChEBI" id="CHEBI:17843"/>
    </ligand>
</feature>
<feature type="site" description="Discriminates between blocked and unblocked aminoacyl-tRNA" evidence="1">
    <location>
        <position position="13"/>
    </location>
</feature>
<feature type="site" description="Stabilizes the basic form of H active site to accept a proton" evidence="1">
    <location>
        <position position="96"/>
    </location>
</feature>
<name>PTH_HAHCH</name>
<accession>Q2SLA3</accession>
<organism>
    <name type="scientific">Hahella chejuensis (strain KCTC 2396)</name>
    <dbReference type="NCBI Taxonomy" id="349521"/>
    <lineage>
        <taxon>Bacteria</taxon>
        <taxon>Pseudomonadati</taxon>
        <taxon>Pseudomonadota</taxon>
        <taxon>Gammaproteobacteria</taxon>
        <taxon>Oceanospirillales</taxon>
        <taxon>Hahellaceae</taxon>
        <taxon>Hahella</taxon>
    </lineage>
</organism>
<gene>
    <name evidence="1" type="primary">pth</name>
    <name type="ordered locus">HCH_01723</name>
</gene>
<reference key="1">
    <citation type="journal article" date="2005" name="Nucleic Acids Res.">
        <title>Genomic blueprint of Hahella chejuensis, a marine microbe producing an algicidal agent.</title>
        <authorList>
            <person name="Jeong H."/>
            <person name="Yim J.H."/>
            <person name="Lee C."/>
            <person name="Choi S.-H."/>
            <person name="Park Y.K."/>
            <person name="Yoon S.H."/>
            <person name="Hur C.-G."/>
            <person name="Kang H.-Y."/>
            <person name="Kim D."/>
            <person name="Lee H.H."/>
            <person name="Park K.H."/>
            <person name="Park S.-H."/>
            <person name="Park H.-S."/>
            <person name="Lee H.K."/>
            <person name="Oh T.K."/>
            <person name="Kim J.F."/>
        </authorList>
    </citation>
    <scope>NUCLEOTIDE SEQUENCE [LARGE SCALE GENOMIC DNA]</scope>
    <source>
        <strain>KCTC 2396</strain>
    </source>
</reference>
<sequence length="195" mass="21713">MAKPVRAIVGLGNPGPDYAQTRHNAGALWLEHLARKKGQFLRPDKKLHGDYCKISIAGEDIHLLFPSTFMNRSGQSVLSLSQFYKIELENILVAHDELDIDAGTLRLKFGGGHGGHNGLRDIIRCFGGNKDFPRMRLGIGHPGDKSKVTSHVLGRISKEDMDKLESAFYQLDTHLEAIISGQWDTAMNRLHSFRA</sequence>
<proteinExistence type="inferred from homology"/>
<comment type="function">
    <text evidence="1">Hydrolyzes ribosome-free peptidyl-tRNAs (with 1 or more amino acids incorporated), which drop off the ribosome during protein synthesis, or as a result of ribosome stalling.</text>
</comment>
<comment type="function">
    <text evidence="1">Catalyzes the release of premature peptidyl moieties from peptidyl-tRNA molecules trapped in stalled 50S ribosomal subunits, and thus maintains levels of free tRNAs and 50S ribosomes.</text>
</comment>
<comment type="catalytic activity">
    <reaction evidence="1">
        <text>an N-acyl-L-alpha-aminoacyl-tRNA + H2O = an N-acyl-L-amino acid + a tRNA + H(+)</text>
        <dbReference type="Rhea" id="RHEA:54448"/>
        <dbReference type="Rhea" id="RHEA-COMP:10123"/>
        <dbReference type="Rhea" id="RHEA-COMP:13883"/>
        <dbReference type="ChEBI" id="CHEBI:15377"/>
        <dbReference type="ChEBI" id="CHEBI:15378"/>
        <dbReference type="ChEBI" id="CHEBI:59874"/>
        <dbReference type="ChEBI" id="CHEBI:78442"/>
        <dbReference type="ChEBI" id="CHEBI:138191"/>
        <dbReference type="EC" id="3.1.1.29"/>
    </reaction>
</comment>
<comment type="subunit">
    <text evidence="1">Monomer.</text>
</comment>
<comment type="subcellular location">
    <subcellularLocation>
        <location evidence="1">Cytoplasm</location>
    </subcellularLocation>
</comment>
<comment type="similarity">
    <text evidence="1">Belongs to the PTH family.</text>
</comment>
<keyword id="KW-0963">Cytoplasm</keyword>
<keyword id="KW-0378">Hydrolase</keyword>
<keyword id="KW-1185">Reference proteome</keyword>
<keyword id="KW-0694">RNA-binding</keyword>
<keyword id="KW-0820">tRNA-binding</keyword>
<dbReference type="EC" id="3.1.1.29" evidence="1"/>
<dbReference type="EMBL" id="CP000155">
    <property type="protein sequence ID" value="ABC28571.1"/>
    <property type="molecule type" value="Genomic_DNA"/>
</dbReference>
<dbReference type="RefSeq" id="WP_011395643.1">
    <property type="nucleotide sequence ID" value="NC_007645.1"/>
</dbReference>
<dbReference type="SMR" id="Q2SLA3"/>
<dbReference type="STRING" id="349521.HCH_01723"/>
<dbReference type="KEGG" id="hch:HCH_01723"/>
<dbReference type="eggNOG" id="COG0193">
    <property type="taxonomic scope" value="Bacteria"/>
</dbReference>
<dbReference type="HOGENOM" id="CLU_062456_3_1_6"/>
<dbReference type="OrthoDB" id="9800507at2"/>
<dbReference type="Proteomes" id="UP000000238">
    <property type="component" value="Chromosome"/>
</dbReference>
<dbReference type="GO" id="GO:0005737">
    <property type="term" value="C:cytoplasm"/>
    <property type="evidence" value="ECO:0007669"/>
    <property type="project" value="UniProtKB-SubCell"/>
</dbReference>
<dbReference type="GO" id="GO:0004045">
    <property type="term" value="F:peptidyl-tRNA hydrolase activity"/>
    <property type="evidence" value="ECO:0007669"/>
    <property type="project" value="UniProtKB-UniRule"/>
</dbReference>
<dbReference type="GO" id="GO:0000049">
    <property type="term" value="F:tRNA binding"/>
    <property type="evidence" value="ECO:0007669"/>
    <property type="project" value="UniProtKB-UniRule"/>
</dbReference>
<dbReference type="GO" id="GO:0006515">
    <property type="term" value="P:protein quality control for misfolded or incompletely synthesized proteins"/>
    <property type="evidence" value="ECO:0007669"/>
    <property type="project" value="UniProtKB-UniRule"/>
</dbReference>
<dbReference type="GO" id="GO:0072344">
    <property type="term" value="P:rescue of stalled ribosome"/>
    <property type="evidence" value="ECO:0007669"/>
    <property type="project" value="UniProtKB-UniRule"/>
</dbReference>
<dbReference type="CDD" id="cd00462">
    <property type="entry name" value="PTH"/>
    <property type="match status" value="1"/>
</dbReference>
<dbReference type="FunFam" id="3.40.50.1470:FF:000001">
    <property type="entry name" value="Peptidyl-tRNA hydrolase"/>
    <property type="match status" value="1"/>
</dbReference>
<dbReference type="Gene3D" id="3.40.50.1470">
    <property type="entry name" value="Peptidyl-tRNA hydrolase"/>
    <property type="match status" value="1"/>
</dbReference>
<dbReference type="HAMAP" id="MF_00083">
    <property type="entry name" value="Pept_tRNA_hydro_bact"/>
    <property type="match status" value="1"/>
</dbReference>
<dbReference type="InterPro" id="IPR001328">
    <property type="entry name" value="Pept_tRNA_hydro"/>
</dbReference>
<dbReference type="InterPro" id="IPR018171">
    <property type="entry name" value="Pept_tRNA_hydro_CS"/>
</dbReference>
<dbReference type="InterPro" id="IPR036416">
    <property type="entry name" value="Pept_tRNA_hydro_sf"/>
</dbReference>
<dbReference type="NCBIfam" id="TIGR00447">
    <property type="entry name" value="pth"/>
    <property type="match status" value="1"/>
</dbReference>
<dbReference type="PANTHER" id="PTHR17224">
    <property type="entry name" value="PEPTIDYL-TRNA HYDROLASE"/>
    <property type="match status" value="1"/>
</dbReference>
<dbReference type="PANTHER" id="PTHR17224:SF1">
    <property type="entry name" value="PEPTIDYL-TRNA HYDROLASE"/>
    <property type="match status" value="1"/>
</dbReference>
<dbReference type="Pfam" id="PF01195">
    <property type="entry name" value="Pept_tRNA_hydro"/>
    <property type="match status" value="1"/>
</dbReference>
<dbReference type="SUPFAM" id="SSF53178">
    <property type="entry name" value="Peptidyl-tRNA hydrolase-like"/>
    <property type="match status" value="1"/>
</dbReference>
<dbReference type="PROSITE" id="PS01196">
    <property type="entry name" value="PEPT_TRNA_HYDROL_2"/>
    <property type="match status" value="1"/>
</dbReference>
<evidence type="ECO:0000255" key="1">
    <source>
        <dbReference type="HAMAP-Rule" id="MF_00083"/>
    </source>
</evidence>
<protein>
    <recommendedName>
        <fullName evidence="1">Peptidyl-tRNA hydrolase</fullName>
        <shortName evidence="1">Pth</shortName>
        <ecNumber evidence="1">3.1.1.29</ecNumber>
    </recommendedName>
</protein>